<comment type="function">
    <text evidence="1">Catalyzes the reversible conversion of 2-phosphoglycerate (2-PG) into phosphoenolpyruvate (PEP). It is essential for the degradation of carbohydrates via glycolysis.</text>
</comment>
<comment type="catalytic activity">
    <reaction evidence="1">
        <text>(2R)-2-phosphoglycerate = phosphoenolpyruvate + H2O</text>
        <dbReference type="Rhea" id="RHEA:10164"/>
        <dbReference type="ChEBI" id="CHEBI:15377"/>
        <dbReference type="ChEBI" id="CHEBI:58289"/>
        <dbReference type="ChEBI" id="CHEBI:58702"/>
        <dbReference type="EC" id="4.2.1.11"/>
    </reaction>
</comment>
<comment type="cofactor">
    <cofactor evidence="1">
        <name>Mg(2+)</name>
        <dbReference type="ChEBI" id="CHEBI:18420"/>
    </cofactor>
    <text evidence="1">Binds a second Mg(2+) ion via substrate during catalysis.</text>
</comment>
<comment type="pathway">
    <text evidence="1">Carbohydrate degradation; glycolysis; pyruvate from D-glyceraldehyde 3-phosphate: step 4/5.</text>
</comment>
<comment type="subcellular location">
    <subcellularLocation>
        <location evidence="1">Cytoplasm</location>
    </subcellularLocation>
    <subcellularLocation>
        <location evidence="1">Secreted</location>
    </subcellularLocation>
    <subcellularLocation>
        <location evidence="1">Cell surface</location>
    </subcellularLocation>
    <text evidence="1">Fractions of enolase are present in both the cytoplasm and on the cell surface.</text>
</comment>
<comment type="similarity">
    <text evidence="1">Belongs to the enolase family.</text>
</comment>
<dbReference type="EC" id="4.2.1.11" evidence="1"/>
<dbReference type="EMBL" id="CP001099">
    <property type="protein sequence ID" value="ACF12285.1"/>
    <property type="molecule type" value="Genomic_DNA"/>
</dbReference>
<dbReference type="RefSeq" id="WP_012503118.1">
    <property type="nucleotide sequence ID" value="NC_011027.1"/>
</dbReference>
<dbReference type="SMR" id="B3QQT2"/>
<dbReference type="STRING" id="517417.Cpar_1893"/>
<dbReference type="KEGG" id="cpc:Cpar_1893"/>
<dbReference type="eggNOG" id="COG0148">
    <property type="taxonomic scope" value="Bacteria"/>
</dbReference>
<dbReference type="HOGENOM" id="CLU_031223_2_1_10"/>
<dbReference type="OrthoDB" id="9804716at2"/>
<dbReference type="UniPathway" id="UPA00109">
    <property type="reaction ID" value="UER00187"/>
</dbReference>
<dbReference type="Proteomes" id="UP000008811">
    <property type="component" value="Chromosome"/>
</dbReference>
<dbReference type="GO" id="GO:0009986">
    <property type="term" value="C:cell surface"/>
    <property type="evidence" value="ECO:0007669"/>
    <property type="project" value="UniProtKB-SubCell"/>
</dbReference>
<dbReference type="GO" id="GO:0005576">
    <property type="term" value="C:extracellular region"/>
    <property type="evidence" value="ECO:0007669"/>
    <property type="project" value="UniProtKB-SubCell"/>
</dbReference>
<dbReference type="GO" id="GO:0000015">
    <property type="term" value="C:phosphopyruvate hydratase complex"/>
    <property type="evidence" value="ECO:0007669"/>
    <property type="project" value="InterPro"/>
</dbReference>
<dbReference type="GO" id="GO:0000287">
    <property type="term" value="F:magnesium ion binding"/>
    <property type="evidence" value="ECO:0007669"/>
    <property type="project" value="UniProtKB-UniRule"/>
</dbReference>
<dbReference type="GO" id="GO:0004634">
    <property type="term" value="F:phosphopyruvate hydratase activity"/>
    <property type="evidence" value="ECO:0007669"/>
    <property type="project" value="UniProtKB-UniRule"/>
</dbReference>
<dbReference type="GO" id="GO:0006096">
    <property type="term" value="P:glycolytic process"/>
    <property type="evidence" value="ECO:0007669"/>
    <property type="project" value="UniProtKB-UniRule"/>
</dbReference>
<dbReference type="CDD" id="cd03313">
    <property type="entry name" value="enolase"/>
    <property type="match status" value="1"/>
</dbReference>
<dbReference type="FunFam" id="3.20.20.120:FF:000001">
    <property type="entry name" value="Enolase"/>
    <property type="match status" value="1"/>
</dbReference>
<dbReference type="FunFam" id="3.30.390.10:FF:000001">
    <property type="entry name" value="Enolase"/>
    <property type="match status" value="1"/>
</dbReference>
<dbReference type="Gene3D" id="3.20.20.120">
    <property type="entry name" value="Enolase-like C-terminal domain"/>
    <property type="match status" value="1"/>
</dbReference>
<dbReference type="Gene3D" id="3.30.390.10">
    <property type="entry name" value="Enolase-like, N-terminal domain"/>
    <property type="match status" value="1"/>
</dbReference>
<dbReference type="HAMAP" id="MF_00318">
    <property type="entry name" value="Enolase"/>
    <property type="match status" value="1"/>
</dbReference>
<dbReference type="InterPro" id="IPR000941">
    <property type="entry name" value="Enolase"/>
</dbReference>
<dbReference type="InterPro" id="IPR036849">
    <property type="entry name" value="Enolase-like_C_sf"/>
</dbReference>
<dbReference type="InterPro" id="IPR029017">
    <property type="entry name" value="Enolase-like_N"/>
</dbReference>
<dbReference type="InterPro" id="IPR020810">
    <property type="entry name" value="Enolase_C"/>
</dbReference>
<dbReference type="InterPro" id="IPR020809">
    <property type="entry name" value="Enolase_CS"/>
</dbReference>
<dbReference type="InterPro" id="IPR020811">
    <property type="entry name" value="Enolase_N"/>
</dbReference>
<dbReference type="NCBIfam" id="TIGR01060">
    <property type="entry name" value="eno"/>
    <property type="match status" value="1"/>
</dbReference>
<dbReference type="PANTHER" id="PTHR11902">
    <property type="entry name" value="ENOLASE"/>
    <property type="match status" value="1"/>
</dbReference>
<dbReference type="PANTHER" id="PTHR11902:SF1">
    <property type="entry name" value="ENOLASE"/>
    <property type="match status" value="1"/>
</dbReference>
<dbReference type="Pfam" id="PF00113">
    <property type="entry name" value="Enolase_C"/>
    <property type="match status" value="1"/>
</dbReference>
<dbReference type="Pfam" id="PF03952">
    <property type="entry name" value="Enolase_N"/>
    <property type="match status" value="1"/>
</dbReference>
<dbReference type="PIRSF" id="PIRSF001400">
    <property type="entry name" value="Enolase"/>
    <property type="match status" value="1"/>
</dbReference>
<dbReference type="PRINTS" id="PR00148">
    <property type="entry name" value="ENOLASE"/>
</dbReference>
<dbReference type="SFLD" id="SFLDS00001">
    <property type="entry name" value="Enolase"/>
    <property type="match status" value="1"/>
</dbReference>
<dbReference type="SFLD" id="SFLDF00002">
    <property type="entry name" value="enolase"/>
    <property type="match status" value="1"/>
</dbReference>
<dbReference type="SMART" id="SM01192">
    <property type="entry name" value="Enolase_C"/>
    <property type="match status" value="1"/>
</dbReference>
<dbReference type="SMART" id="SM01193">
    <property type="entry name" value="Enolase_N"/>
    <property type="match status" value="1"/>
</dbReference>
<dbReference type="SUPFAM" id="SSF51604">
    <property type="entry name" value="Enolase C-terminal domain-like"/>
    <property type="match status" value="1"/>
</dbReference>
<dbReference type="SUPFAM" id="SSF54826">
    <property type="entry name" value="Enolase N-terminal domain-like"/>
    <property type="match status" value="1"/>
</dbReference>
<dbReference type="PROSITE" id="PS00164">
    <property type="entry name" value="ENOLASE"/>
    <property type="match status" value="1"/>
</dbReference>
<reference key="1">
    <citation type="submission" date="2008-06" db="EMBL/GenBank/DDBJ databases">
        <title>Complete sequence of Chlorobaculum parvum NCIB 8327.</title>
        <authorList>
            <consortium name="US DOE Joint Genome Institute"/>
            <person name="Lucas S."/>
            <person name="Copeland A."/>
            <person name="Lapidus A."/>
            <person name="Glavina del Rio T."/>
            <person name="Dalin E."/>
            <person name="Tice H."/>
            <person name="Bruce D."/>
            <person name="Goodwin L."/>
            <person name="Pitluck S."/>
            <person name="Schmutz J."/>
            <person name="Larimer F."/>
            <person name="Land M."/>
            <person name="Hauser L."/>
            <person name="Kyrpides N."/>
            <person name="Mikhailova N."/>
            <person name="Zhao F."/>
            <person name="Li T."/>
            <person name="Liu Z."/>
            <person name="Overmann J."/>
            <person name="Bryant D.A."/>
            <person name="Richardson P."/>
        </authorList>
    </citation>
    <scope>NUCLEOTIDE SEQUENCE [LARGE SCALE GENOMIC DNA]</scope>
    <source>
        <strain>DSM 263 / NCIMB 8327</strain>
    </source>
</reference>
<protein>
    <recommendedName>
        <fullName evidence="1">Enolase</fullName>
        <ecNumber evidence="1">4.2.1.11</ecNumber>
    </recommendedName>
    <alternativeName>
        <fullName evidence="1">2-phospho-D-glycerate hydro-lyase</fullName>
    </alternativeName>
    <alternativeName>
        <fullName evidence="1">2-phosphoglycerate dehydratase</fullName>
    </alternativeName>
</protein>
<evidence type="ECO:0000255" key="1">
    <source>
        <dbReference type="HAMAP-Rule" id="MF_00318"/>
    </source>
</evidence>
<proteinExistence type="inferred from homology"/>
<sequence>MSVITKIHARQIMDSRGNPTVEVDVYTESSFGRAAVPSGASTGVHEAVELRDNDKSVFLGKGVLKAVENVNTVINSALQGMDVTEQEEIDAKLLELDGTPNKSVLGANAILGVSLACAKAGAEYSALPLYRYIGGTTAKTLPVPMMNVLNGGAHADNTVDFQEFMIMPIGFERYSDALRCGAEVFHSLKALLHKRGLSTAVGDEGGFAPNVESNEQAIELVIEAIGLAGYKAGAPTDKGGLGDGHVMIALDPASSEFYDTEKKKYVFKKSSGRELSSEEMASYWADWASRYPIISIEDGMAEDDWEGWKLLTEKIGDRVQLVGDDLFVTNSKRLGEGIEKGVGNSILIKVNQIGTLTETLQAIDLAKRNGYTSVISHRSGETEDTTIAQIAVATNAGQIKTGSMSRSDRMAKYNELLRIEEMLGDTAVYPGIKAFRV</sequence>
<gene>
    <name evidence="1" type="primary">eno</name>
    <name type="ordered locus">Cpar_1893</name>
</gene>
<accession>B3QQT2</accession>
<keyword id="KW-0963">Cytoplasm</keyword>
<keyword id="KW-0324">Glycolysis</keyword>
<keyword id="KW-0456">Lyase</keyword>
<keyword id="KW-0460">Magnesium</keyword>
<keyword id="KW-0479">Metal-binding</keyword>
<keyword id="KW-0964">Secreted</keyword>
<feature type="chain" id="PRO_1000115844" description="Enolase">
    <location>
        <begin position="1"/>
        <end position="437"/>
    </location>
</feature>
<feature type="active site" description="Proton donor" evidence="1">
    <location>
        <position position="204"/>
    </location>
</feature>
<feature type="active site" description="Proton acceptor" evidence="1">
    <location>
        <position position="349"/>
    </location>
</feature>
<feature type="binding site" evidence="1">
    <location>
        <position position="162"/>
    </location>
    <ligand>
        <name>(2R)-2-phosphoglycerate</name>
        <dbReference type="ChEBI" id="CHEBI:58289"/>
    </ligand>
</feature>
<feature type="binding site" evidence="1">
    <location>
        <position position="251"/>
    </location>
    <ligand>
        <name>Mg(2+)</name>
        <dbReference type="ChEBI" id="CHEBI:18420"/>
    </ligand>
</feature>
<feature type="binding site" evidence="1">
    <location>
        <position position="297"/>
    </location>
    <ligand>
        <name>Mg(2+)</name>
        <dbReference type="ChEBI" id="CHEBI:18420"/>
    </ligand>
</feature>
<feature type="binding site" evidence="1">
    <location>
        <position position="324"/>
    </location>
    <ligand>
        <name>Mg(2+)</name>
        <dbReference type="ChEBI" id="CHEBI:18420"/>
    </ligand>
</feature>
<feature type="binding site" evidence="1">
    <location>
        <position position="349"/>
    </location>
    <ligand>
        <name>(2R)-2-phosphoglycerate</name>
        <dbReference type="ChEBI" id="CHEBI:58289"/>
    </ligand>
</feature>
<feature type="binding site" evidence="1">
    <location>
        <position position="378"/>
    </location>
    <ligand>
        <name>(2R)-2-phosphoglycerate</name>
        <dbReference type="ChEBI" id="CHEBI:58289"/>
    </ligand>
</feature>
<feature type="binding site" evidence="1">
    <location>
        <position position="379"/>
    </location>
    <ligand>
        <name>(2R)-2-phosphoglycerate</name>
        <dbReference type="ChEBI" id="CHEBI:58289"/>
    </ligand>
</feature>
<feature type="binding site" evidence="1">
    <location>
        <position position="400"/>
    </location>
    <ligand>
        <name>(2R)-2-phosphoglycerate</name>
        <dbReference type="ChEBI" id="CHEBI:58289"/>
    </ligand>
</feature>
<name>ENO_CHLP8</name>
<organism>
    <name type="scientific">Chlorobaculum parvum (strain DSM 263 / NCIMB 8327)</name>
    <name type="common">Chlorobium vibrioforme subsp. thiosulfatophilum</name>
    <dbReference type="NCBI Taxonomy" id="517417"/>
    <lineage>
        <taxon>Bacteria</taxon>
        <taxon>Pseudomonadati</taxon>
        <taxon>Chlorobiota</taxon>
        <taxon>Chlorobiia</taxon>
        <taxon>Chlorobiales</taxon>
        <taxon>Chlorobiaceae</taxon>
        <taxon>Chlorobaculum</taxon>
    </lineage>
</organism>